<reference evidence="7" key="1">
    <citation type="journal article" date="1997" name="Proc. Natl. Acad. Sci. U.S.A.">
        <title>RAB22 and RAB163/mouse BRCA2: proteins that specifically interact with the RAD51 protein.</title>
        <authorList>
            <person name="Mizuta R."/>
            <person name="LaSalle J.M."/>
            <person name="Cheng H.-L."/>
            <person name="Shinohara A."/>
            <person name="Ogawa H."/>
            <person name="Copeland N.G."/>
            <person name="Jenkins N.A."/>
            <person name="Lalande M."/>
            <person name="Alt F.W."/>
        </authorList>
    </citation>
    <scope>NUCLEOTIDE SEQUENCE [MRNA]</scope>
    <scope>INTERACTION WITH RAD51</scope>
    <scope>SUBCELLULAR LOCATION</scope>
    <scope>TISSUE SPECIFICITY</scope>
    <source>
        <tissue>Testis</tissue>
        <tissue>Thymus</tissue>
    </source>
</reference>
<reference key="2">
    <citation type="journal article" date="2005" name="Science">
        <title>The transcriptional landscape of the mammalian genome.</title>
        <authorList>
            <person name="Carninci P."/>
            <person name="Kasukawa T."/>
            <person name="Katayama S."/>
            <person name="Gough J."/>
            <person name="Frith M.C."/>
            <person name="Maeda N."/>
            <person name="Oyama R."/>
            <person name="Ravasi T."/>
            <person name="Lenhard B."/>
            <person name="Wells C."/>
            <person name="Kodzius R."/>
            <person name="Shimokawa K."/>
            <person name="Bajic V.B."/>
            <person name="Brenner S.E."/>
            <person name="Batalov S."/>
            <person name="Forrest A.R."/>
            <person name="Zavolan M."/>
            <person name="Davis M.J."/>
            <person name="Wilming L.G."/>
            <person name="Aidinis V."/>
            <person name="Allen J.E."/>
            <person name="Ambesi-Impiombato A."/>
            <person name="Apweiler R."/>
            <person name="Aturaliya R.N."/>
            <person name="Bailey T.L."/>
            <person name="Bansal M."/>
            <person name="Baxter L."/>
            <person name="Beisel K.W."/>
            <person name="Bersano T."/>
            <person name="Bono H."/>
            <person name="Chalk A.M."/>
            <person name="Chiu K.P."/>
            <person name="Choudhary V."/>
            <person name="Christoffels A."/>
            <person name="Clutterbuck D.R."/>
            <person name="Crowe M.L."/>
            <person name="Dalla E."/>
            <person name="Dalrymple B.P."/>
            <person name="de Bono B."/>
            <person name="Della Gatta G."/>
            <person name="di Bernardo D."/>
            <person name="Down T."/>
            <person name="Engstrom P."/>
            <person name="Fagiolini M."/>
            <person name="Faulkner G."/>
            <person name="Fletcher C.F."/>
            <person name="Fukushima T."/>
            <person name="Furuno M."/>
            <person name="Futaki S."/>
            <person name="Gariboldi M."/>
            <person name="Georgii-Hemming P."/>
            <person name="Gingeras T.R."/>
            <person name="Gojobori T."/>
            <person name="Green R.E."/>
            <person name="Gustincich S."/>
            <person name="Harbers M."/>
            <person name="Hayashi Y."/>
            <person name="Hensch T.K."/>
            <person name="Hirokawa N."/>
            <person name="Hill D."/>
            <person name="Huminiecki L."/>
            <person name="Iacono M."/>
            <person name="Ikeo K."/>
            <person name="Iwama A."/>
            <person name="Ishikawa T."/>
            <person name="Jakt M."/>
            <person name="Kanapin A."/>
            <person name="Katoh M."/>
            <person name="Kawasawa Y."/>
            <person name="Kelso J."/>
            <person name="Kitamura H."/>
            <person name="Kitano H."/>
            <person name="Kollias G."/>
            <person name="Krishnan S.P."/>
            <person name="Kruger A."/>
            <person name="Kummerfeld S.K."/>
            <person name="Kurochkin I.V."/>
            <person name="Lareau L.F."/>
            <person name="Lazarevic D."/>
            <person name="Lipovich L."/>
            <person name="Liu J."/>
            <person name="Liuni S."/>
            <person name="McWilliam S."/>
            <person name="Madan Babu M."/>
            <person name="Madera M."/>
            <person name="Marchionni L."/>
            <person name="Matsuda H."/>
            <person name="Matsuzawa S."/>
            <person name="Miki H."/>
            <person name="Mignone F."/>
            <person name="Miyake S."/>
            <person name="Morris K."/>
            <person name="Mottagui-Tabar S."/>
            <person name="Mulder N."/>
            <person name="Nakano N."/>
            <person name="Nakauchi H."/>
            <person name="Ng P."/>
            <person name="Nilsson R."/>
            <person name="Nishiguchi S."/>
            <person name="Nishikawa S."/>
            <person name="Nori F."/>
            <person name="Ohara O."/>
            <person name="Okazaki Y."/>
            <person name="Orlando V."/>
            <person name="Pang K.C."/>
            <person name="Pavan W.J."/>
            <person name="Pavesi G."/>
            <person name="Pesole G."/>
            <person name="Petrovsky N."/>
            <person name="Piazza S."/>
            <person name="Reed J."/>
            <person name="Reid J.F."/>
            <person name="Ring B.Z."/>
            <person name="Ringwald M."/>
            <person name="Rost B."/>
            <person name="Ruan Y."/>
            <person name="Salzberg S.L."/>
            <person name="Sandelin A."/>
            <person name="Schneider C."/>
            <person name="Schoenbach C."/>
            <person name="Sekiguchi K."/>
            <person name="Semple C.A."/>
            <person name="Seno S."/>
            <person name="Sessa L."/>
            <person name="Sheng Y."/>
            <person name="Shibata Y."/>
            <person name="Shimada H."/>
            <person name="Shimada K."/>
            <person name="Silva D."/>
            <person name="Sinclair B."/>
            <person name="Sperling S."/>
            <person name="Stupka E."/>
            <person name="Sugiura K."/>
            <person name="Sultana R."/>
            <person name="Takenaka Y."/>
            <person name="Taki K."/>
            <person name="Tammoja K."/>
            <person name="Tan S.L."/>
            <person name="Tang S."/>
            <person name="Taylor M.S."/>
            <person name="Tegner J."/>
            <person name="Teichmann S.A."/>
            <person name="Ueda H.R."/>
            <person name="van Nimwegen E."/>
            <person name="Verardo R."/>
            <person name="Wei C.L."/>
            <person name="Yagi K."/>
            <person name="Yamanishi H."/>
            <person name="Zabarovsky E."/>
            <person name="Zhu S."/>
            <person name="Zimmer A."/>
            <person name="Hide W."/>
            <person name="Bult C."/>
            <person name="Grimmond S.M."/>
            <person name="Teasdale R.D."/>
            <person name="Liu E.T."/>
            <person name="Brusic V."/>
            <person name="Quackenbush J."/>
            <person name="Wahlestedt C."/>
            <person name="Mattick J.S."/>
            <person name="Hume D.A."/>
            <person name="Kai C."/>
            <person name="Sasaki D."/>
            <person name="Tomaru Y."/>
            <person name="Fukuda S."/>
            <person name="Kanamori-Katayama M."/>
            <person name="Suzuki M."/>
            <person name="Aoki J."/>
            <person name="Arakawa T."/>
            <person name="Iida J."/>
            <person name="Imamura K."/>
            <person name="Itoh M."/>
            <person name="Kato T."/>
            <person name="Kawaji H."/>
            <person name="Kawagashira N."/>
            <person name="Kawashima T."/>
            <person name="Kojima M."/>
            <person name="Kondo S."/>
            <person name="Konno H."/>
            <person name="Nakano K."/>
            <person name="Ninomiya N."/>
            <person name="Nishio T."/>
            <person name="Okada M."/>
            <person name="Plessy C."/>
            <person name="Shibata K."/>
            <person name="Shiraki T."/>
            <person name="Suzuki S."/>
            <person name="Tagami M."/>
            <person name="Waki K."/>
            <person name="Watahiki A."/>
            <person name="Okamura-Oho Y."/>
            <person name="Suzuki H."/>
            <person name="Kawai J."/>
            <person name="Hayashizaki Y."/>
        </authorList>
    </citation>
    <scope>NUCLEOTIDE SEQUENCE [LARGE SCALE MRNA]</scope>
    <source>
        <strain>C57BL/6J</strain>
        <tissue>Embryo</tissue>
        <tissue>Forelimb</tissue>
        <tissue>Hypothalamus</tissue>
    </source>
</reference>
<reference key="3">
    <citation type="journal article" date="2004" name="Genome Res.">
        <title>The status, quality, and expansion of the NIH full-length cDNA project: the Mammalian Gene Collection (MGC).</title>
        <authorList>
            <consortium name="The MGC Project Team"/>
        </authorList>
    </citation>
    <scope>NUCLEOTIDE SEQUENCE [LARGE SCALE MRNA]</scope>
    <source>
        <strain evidence="8">Czech II</strain>
        <tissue evidence="8">Mammary gland</tissue>
    </source>
</reference>
<reference key="4">
    <citation type="journal article" date="2007" name="Proc. Natl. Acad. Sci. U.S.A.">
        <title>Large-scale phosphorylation analysis of mouse liver.</title>
        <authorList>
            <person name="Villen J."/>
            <person name="Beausoleil S.A."/>
            <person name="Gerber S.A."/>
            <person name="Gygi S.P."/>
        </authorList>
    </citation>
    <scope>IDENTIFICATION BY MASS SPECTROMETRY [LARGE SCALE ANALYSIS]</scope>
    <source>
        <tissue>Liver</tissue>
    </source>
</reference>
<reference key="5">
    <citation type="journal article" date="2010" name="Cell">
        <title>A tissue-specific atlas of mouse protein phosphorylation and expression.</title>
        <authorList>
            <person name="Huttlin E.L."/>
            <person name="Jedrychowski M.P."/>
            <person name="Elias J.E."/>
            <person name="Goswami T."/>
            <person name="Rad R."/>
            <person name="Beausoleil S.A."/>
            <person name="Villen J."/>
            <person name="Haas W."/>
            <person name="Sowa M.E."/>
            <person name="Gygi S.P."/>
        </authorList>
    </citation>
    <scope>PHOSPHORYLATION [LARGE SCALE ANALYSIS] AT SER-19 AND SER-23</scope>
    <scope>IDENTIFICATION BY MASS SPECTROMETRY [LARGE SCALE ANALYSIS]</scope>
    <source>
        <tissue>Lung</tissue>
        <tissue>Spleen</tissue>
        <tissue>Testis</tissue>
    </source>
</reference>
<reference key="6">
    <citation type="journal article" date="2011" name="Proc. Natl. Acad. Sci. U.S.A.">
        <title>Molecular basis for enhancement of the meiotic DMC1 recombinase by RAD51 associated protein 1 (RAD51AP1).</title>
        <authorList>
            <person name="Dray E."/>
            <person name="Dunlop M.H."/>
            <person name="Kauppi L."/>
            <person name="San Filippo J."/>
            <person name="Wiese C."/>
            <person name="Tsai M.S."/>
            <person name="Begovic S."/>
            <person name="Schild D."/>
            <person name="Jasin M."/>
            <person name="Keeney S."/>
            <person name="Sung P."/>
        </authorList>
    </citation>
    <scope>SUBCELLULAR LOCATION</scope>
    <scope>DEVELOPMENTAL STAGE</scope>
</reference>
<proteinExistence type="evidence at protein level"/>
<name>R51A1_MOUSE</name>
<sequence length="337" mass="36227">MVRPTRNRKPINYSQFEDSGNDSDDDFISSSTPVNKSKTVPKVLKQDKPKPNLKNLQKEEVLPTEPPKKRVALDDKVFQRGLEVALALSVKELPTLTNQVKKSKEKSTDKQGKEKTENTGKPPRVSNCSVASDDVEDLDKITEEGDASSVEGERKSPSQAKAPRRRAPSEGSDGSSANDTESESATGEGSESDPDFDESKESDEDFGVRRSKESKKKTVQKKPAGEKKERKSKPKCEASVTSVDPAPAAIKSGSPSLPQAVGLPSEATRKPAIMCSPSAESKRPKWVPPAASGSRNSSSNALAGTPAKSPSQSLRLGLSRLAPVKRLHPSATSSQVR</sequence>
<feature type="chain" id="PRO_0000097141" description="RAD51-associated protein 1">
    <location>
        <begin position="1"/>
        <end position="337"/>
    </location>
</feature>
<feature type="region of interest" description="Disordered" evidence="2">
    <location>
        <begin position="1"/>
        <end position="69"/>
    </location>
</feature>
<feature type="region of interest" description="Interaction with DNA" evidence="1">
    <location>
        <begin position="32"/>
        <end position="50"/>
    </location>
</feature>
<feature type="region of interest" description="Disordered" evidence="2">
    <location>
        <begin position="88"/>
        <end position="337"/>
    </location>
</feature>
<feature type="region of interest" description="Interaction with DNA" evidence="1">
    <location>
        <begin position="225"/>
        <end position="286"/>
    </location>
</feature>
<feature type="region of interest" description="Interaction with RAD51" evidence="1">
    <location>
        <begin position="295"/>
        <end position="334"/>
    </location>
</feature>
<feature type="short sequence motif" description="SIM motif" evidence="1">
    <location>
        <begin position="138"/>
        <end position="143"/>
    </location>
</feature>
<feature type="short sequence motif" description="WVPP motif" evidence="1">
    <location>
        <begin position="286"/>
        <end position="289"/>
    </location>
</feature>
<feature type="compositionally biased region" description="Polar residues" evidence="2">
    <location>
        <begin position="28"/>
        <end position="38"/>
    </location>
</feature>
<feature type="compositionally biased region" description="Basic and acidic residues" evidence="2">
    <location>
        <begin position="44"/>
        <end position="69"/>
    </location>
</feature>
<feature type="compositionally biased region" description="Basic and acidic residues" evidence="2">
    <location>
        <begin position="105"/>
        <end position="118"/>
    </location>
</feature>
<feature type="compositionally biased region" description="Acidic residues" evidence="2">
    <location>
        <begin position="190"/>
        <end position="205"/>
    </location>
</feature>
<feature type="compositionally biased region" description="Low complexity" evidence="2">
    <location>
        <begin position="290"/>
        <end position="304"/>
    </location>
</feature>
<feature type="modified residue" description="Phosphoserine" evidence="10">
    <location>
        <position position="19"/>
    </location>
</feature>
<feature type="modified residue" description="Phosphoserine" evidence="10">
    <location>
        <position position="23"/>
    </location>
</feature>
<feature type="modified residue" description="Phosphoserine" evidence="1">
    <location>
        <position position="103"/>
    </location>
</feature>
<feature type="modified residue" description="Phosphoserine" evidence="1">
    <location>
        <position position="107"/>
    </location>
</feature>
<feature type="modified residue" description="Phosphoserine" evidence="1">
    <location>
        <position position="309"/>
    </location>
</feature>
<feature type="cross-link" description="Glycyl lysine isopeptide (Lys-Gly) (interchain with G-Cter in SUMO; alternate)" evidence="1">
    <location>
        <position position="251"/>
    </location>
</feature>
<feature type="cross-link" description="Glycyl lysine isopeptide (Lys-Gly) (interchain with G-Cter in ubiquitin; alternate)" evidence="1">
    <location>
        <position position="251"/>
    </location>
</feature>
<feature type="sequence conflict" description="In Ref. 2; BAB27579/BAC37025/BAC37671." evidence="6" ref="2">
    <original>T</original>
    <variation>I</variation>
    <location>
        <position position="5"/>
    </location>
</feature>
<feature type="sequence conflict" description="In Ref. 1; AAB91541." evidence="6" ref="1">
    <original>T</original>
    <variation>A</variation>
    <location>
        <position position="39"/>
    </location>
</feature>
<feature type="sequence conflict" description="In Ref. 1; AAB91541." evidence="6" ref="1">
    <original>E</original>
    <variation>G</variation>
    <location>
        <position position="114"/>
    </location>
</feature>
<feature type="sequence conflict" description="In Ref. 1; AAB91541." evidence="6" ref="1">
    <original>G</original>
    <variation>D</variation>
    <location>
        <position position="120"/>
    </location>
</feature>
<feature type="sequence conflict" description="In Ref. 2; BAB27579/BAC37025/BAC37671." evidence="6" ref="2">
    <original>R</original>
    <variation>H</variation>
    <location>
        <position position="124"/>
    </location>
</feature>
<feature type="sequence conflict" description="In Ref. 2; BAC37025." evidence="6" ref="2">
    <location>
        <position position="136"/>
    </location>
</feature>
<feature type="sequence conflict" description="In Ref. 3; AAH03738." evidence="6" ref="3">
    <original>K</original>
    <variation>R</variation>
    <location>
        <position position="270"/>
    </location>
</feature>
<feature type="sequence conflict" description="In Ref. 2; BAC37671." evidence="6" ref="2">
    <original>VR</original>
    <variation>SAVAEKDLLGPWDLQAGLSYSAST</variation>
    <location>
        <begin position="336"/>
        <end position="337"/>
    </location>
</feature>
<comment type="function">
    <text evidence="1">Structure-specific DNA-binding protein involved in DNA repair by promoting RAD51-mediated homologous recombination. Acts by stimulating D-Loop formation by RAD51: specifically enhances joint molecule formation through its structure-specific DNA interaction and its interaction with RAD51. Binds single-stranded DNA (ssDNA), double-stranded DNA (dsDNA) and secondary DNA structures, such as D-loop structures: has a strong preference for branched-DNA structures that are obligatory intermediates during joint molecule formation. Cooperates with WDR48/UAF1 to stimulate RAD51-mediated homologous recombination: both WDR48/UAF1 and RAD51AP1 have coordinated role in DNA-binding during homologous recombination and DNA repair. WDR48/UAF1 and RAD51AP1 also have a coordinated role in DNA-binding to promote USP1-mediated deubiquitination of FANCD2. Also involved in meiosis by promoting DMC1-mediated homologous meiotic recombination.</text>
</comment>
<comment type="subunit">
    <text evidence="1 4">Monomer; elongated monodisperse monomer (By similarity). Interacts (via C-terminal region) with RAD51; the interaction is direct (PubMed:9192668). Interacts (via SIM motif) with WDR48/UAF1; WDR48/UAF1 and RAD51AP1 cooperate together to stimulate RAD51-mediated homologous recombination (HR) (By similarity). Interacts (via WVPP motif) with DMC1; the interaction is direct (By similarity). Interacts with PALB2. Interacts with RAD52 (By similarity).</text>
</comment>
<comment type="subcellular location">
    <subcellularLocation>
        <location evidence="3 4">Chromosome</location>
    </subcellularLocation>
    <subcellularLocation>
        <location evidence="3 4">Nucleus</location>
    </subcellularLocation>
    <subcellularLocation>
        <location evidence="1">Chromosome</location>
        <location evidence="1">Telomere</location>
    </subcellularLocation>
    <text evidence="3 4">Colocalizes with RAD51 to multiple nuclear foci (PubMed:21307306, PubMed:9192668). Colocalizes with DMC1 on meiotic chromatin (PubMed:21307306).</text>
</comment>
<comment type="tissue specificity">
    <text evidence="4">Most abundantly expressed in testis (PubMed:9192668). Also expressed in spleen, thymus and bone marrow (PubMed:9192668). Not detected in heart, kidney or liver (PubMed:9192668).</text>
</comment>
<comment type="developmental stage">
    <text evidence="3">Highly expressed in 15 to 21 days postpartum (dpp) testes.</text>
</comment>
<comment type="PTM">
    <text evidence="1">Sumoylation with SUMO2/3 by NSMCE2/MMS21 promotes stabilization, possibly by preventing ubiquitination.</text>
</comment>
<evidence type="ECO:0000250" key="1">
    <source>
        <dbReference type="UniProtKB" id="Q96B01"/>
    </source>
</evidence>
<evidence type="ECO:0000256" key="2">
    <source>
        <dbReference type="SAM" id="MobiDB-lite"/>
    </source>
</evidence>
<evidence type="ECO:0000269" key="3">
    <source>
    </source>
</evidence>
<evidence type="ECO:0000269" key="4">
    <source>
    </source>
</evidence>
<evidence type="ECO:0000303" key="5">
    <source>
    </source>
</evidence>
<evidence type="ECO:0000305" key="6"/>
<evidence type="ECO:0000312" key="7">
    <source>
        <dbReference type="EMBL" id="AAB91541.1"/>
    </source>
</evidence>
<evidence type="ECO:0000312" key="8">
    <source>
        <dbReference type="EMBL" id="AAH03738.1"/>
    </source>
</evidence>
<evidence type="ECO:0000312" key="9">
    <source>
        <dbReference type="MGI" id="MGI:1098224"/>
    </source>
</evidence>
<evidence type="ECO:0007744" key="10">
    <source>
    </source>
</evidence>
<protein>
    <recommendedName>
        <fullName evidence="6">RAD51-associated protein 1</fullName>
    </recommendedName>
    <alternativeName>
        <fullName evidence="5">RAB22</fullName>
    </alternativeName>
</protein>
<organism>
    <name type="scientific">Mus musculus</name>
    <name type="common">Mouse</name>
    <dbReference type="NCBI Taxonomy" id="10090"/>
    <lineage>
        <taxon>Eukaryota</taxon>
        <taxon>Metazoa</taxon>
        <taxon>Chordata</taxon>
        <taxon>Craniata</taxon>
        <taxon>Vertebrata</taxon>
        <taxon>Euteleostomi</taxon>
        <taxon>Mammalia</taxon>
        <taxon>Eutheria</taxon>
        <taxon>Euarchontoglires</taxon>
        <taxon>Glires</taxon>
        <taxon>Rodentia</taxon>
        <taxon>Myomorpha</taxon>
        <taxon>Muroidea</taxon>
        <taxon>Muridae</taxon>
        <taxon>Murinae</taxon>
        <taxon>Mus</taxon>
        <taxon>Mus</taxon>
    </lineage>
</organism>
<accession>Q8C551</accession>
<accession>O55219</accession>
<accession>Q8BP36</accession>
<accession>Q99L94</accession>
<accession>Q9D0J0</accession>
<keyword id="KW-0158">Chromosome</keyword>
<keyword id="KW-0227">DNA damage</keyword>
<keyword id="KW-0233">DNA recombination</keyword>
<keyword id="KW-0234">DNA repair</keyword>
<keyword id="KW-0238">DNA-binding</keyword>
<keyword id="KW-1017">Isopeptide bond</keyword>
<keyword id="KW-0469">Meiosis</keyword>
<keyword id="KW-0539">Nucleus</keyword>
<keyword id="KW-0597">Phosphoprotein</keyword>
<keyword id="KW-1185">Reference proteome</keyword>
<keyword id="KW-0694">RNA-binding</keyword>
<keyword id="KW-0779">Telomere</keyword>
<keyword id="KW-0832">Ubl conjugation</keyword>
<gene>
    <name evidence="9" type="primary">Rad51ap1</name>
</gene>
<dbReference type="EMBL" id="U93583">
    <property type="protein sequence ID" value="AAB91541.1"/>
    <property type="molecule type" value="mRNA"/>
</dbReference>
<dbReference type="EMBL" id="AK011379">
    <property type="protein sequence ID" value="BAB27579.1"/>
    <property type="molecule type" value="mRNA"/>
</dbReference>
<dbReference type="EMBL" id="AK077829">
    <property type="protein sequence ID" value="BAC37025.1"/>
    <property type="molecule type" value="mRNA"/>
</dbReference>
<dbReference type="EMBL" id="AK079525">
    <property type="protein sequence ID" value="BAC37671.1"/>
    <property type="molecule type" value="mRNA"/>
</dbReference>
<dbReference type="EMBL" id="BC003738">
    <property type="protein sequence ID" value="AAH03738.1"/>
    <property type="molecule type" value="mRNA"/>
</dbReference>
<dbReference type="CCDS" id="CCDS39644.1"/>
<dbReference type="RefSeq" id="NP_001334384.1">
    <property type="nucleotide sequence ID" value="NM_001347455.1"/>
</dbReference>
<dbReference type="RefSeq" id="NP_033039.2">
    <property type="nucleotide sequence ID" value="NM_009013.4"/>
</dbReference>
<dbReference type="BioGRID" id="202565">
    <property type="interactions" value="1"/>
</dbReference>
<dbReference type="FunCoup" id="Q8C551">
    <property type="interactions" value="1028"/>
</dbReference>
<dbReference type="STRING" id="10090.ENSMUSP00000107841"/>
<dbReference type="iPTMnet" id="Q8C551"/>
<dbReference type="PhosphoSitePlus" id="Q8C551"/>
<dbReference type="jPOST" id="Q8C551"/>
<dbReference type="PaxDb" id="10090-ENSMUSP00000107841"/>
<dbReference type="PeptideAtlas" id="Q8C551"/>
<dbReference type="ProteomicsDB" id="300284"/>
<dbReference type="Pumba" id="Q8C551"/>
<dbReference type="DNASU" id="19362"/>
<dbReference type="GeneID" id="19362"/>
<dbReference type="KEGG" id="mmu:19362"/>
<dbReference type="UCSC" id="uc009dvi.1">
    <property type="organism name" value="mouse"/>
</dbReference>
<dbReference type="AGR" id="MGI:1098224"/>
<dbReference type="CTD" id="10635"/>
<dbReference type="MGI" id="MGI:1098224">
    <property type="gene designation" value="Rad51ap1"/>
</dbReference>
<dbReference type="eggNOG" id="ENOG502RXRS">
    <property type="taxonomic scope" value="Eukaryota"/>
</dbReference>
<dbReference type="InParanoid" id="Q8C551"/>
<dbReference type="OrthoDB" id="6162659at2759"/>
<dbReference type="PhylomeDB" id="Q8C551"/>
<dbReference type="TreeFam" id="TF335955"/>
<dbReference type="Reactome" id="R-MMU-5685942">
    <property type="pathway name" value="HDR through Homologous Recombination (HRR)"/>
</dbReference>
<dbReference type="Reactome" id="R-MMU-5693568">
    <property type="pathway name" value="Resolution of D-loop Structures through Holliday Junction Intermediates"/>
</dbReference>
<dbReference type="Reactome" id="R-MMU-5693579">
    <property type="pathway name" value="Homologous DNA Pairing and Strand Exchange"/>
</dbReference>
<dbReference type="BioGRID-ORCS" id="19362">
    <property type="hits" value="5 hits in 113 CRISPR screens"/>
</dbReference>
<dbReference type="ChiTaRS" id="Rad51ap1">
    <property type="organism name" value="mouse"/>
</dbReference>
<dbReference type="PRO" id="PR:Q8C551"/>
<dbReference type="Proteomes" id="UP000000589">
    <property type="component" value="Unplaced"/>
</dbReference>
<dbReference type="RNAct" id="Q8C551">
    <property type="molecule type" value="protein"/>
</dbReference>
<dbReference type="GO" id="GO:0005694">
    <property type="term" value="C:chromosome"/>
    <property type="evidence" value="ECO:0000314"/>
    <property type="project" value="UniProtKB"/>
</dbReference>
<dbReference type="GO" id="GO:0000781">
    <property type="term" value="C:chromosome, telomeric region"/>
    <property type="evidence" value="ECO:0007669"/>
    <property type="project" value="UniProtKB-SubCell"/>
</dbReference>
<dbReference type="GO" id="GO:0005634">
    <property type="term" value="C:nucleus"/>
    <property type="evidence" value="ECO:0000314"/>
    <property type="project" value="UniProtKB"/>
</dbReference>
<dbReference type="GO" id="GO:0062037">
    <property type="term" value="F:D-loop DNA binding"/>
    <property type="evidence" value="ECO:0000250"/>
    <property type="project" value="UniProtKB"/>
</dbReference>
<dbReference type="GO" id="GO:0003677">
    <property type="term" value="F:DNA binding"/>
    <property type="evidence" value="ECO:0000250"/>
    <property type="project" value="UniProtKB"/>
</dbReference>
<dbReference type="GO" id="GO:0000217">
    <property type="term" value="F:DNA secondary structure binding"/>
    <property type="evidence" value="ECO:0000250"/>
    <property type="project" value="UniProtKB"/>
</dbReference>
<dbReference type="GO" id="GO:0003690">
    <property type="term" value="F:double-stranded DNA binding"/>
    <property type="evidence" value="ECO:0000250"/>
    <property type="project" value="UniProtKB"/>
</dbReference>
<dbReference type="GO" id="GO:0003723">
    <property type="term" value="F:RNA binding"/>
    <property type="evidence" value="ECO:0000250"/>
    <property type="project" value="UniProtKB"/>
</dbReference>
<dbReference type="GO" id="GO:0003697">
    <property type="term" value="F:single-stranded DNA binding"/>
    <property type="evidence" value="ECO:0000250"/>
    <property type="project" value="UniProtKB"/>
</dbReference>
<dbReference type="GO" id="GO:0071479">
    <property type="term" value="P:cellular response to ionizing radiation"/>
    <property type="evidence" value="ECO:0000250"/>
    <property type="project" value="UniProtKB"/>
</dbReference>
<dbReference type="GO" id="GO:0006974">
    <property type="term" value="P:DNA damage response"/>
    <property type="evidence" value="ECO:0000250"/>
    <property type="project" value="UniProtKB"/>
</dbReference>
<dbReference type="GO" id="GO:0006310">
    <property type="term" value="P:DNA recombination"/>
    <property type="evidence" value="ECO:0000353"/>
    <property type="project" value="MGI"/>
</dbReference>
<dbReference type="GO" id="GO:0006281">
    <property type="term" value="P:DNA repair"/>
    <property type="evidence" value="ECO:0007669"/>
    <property type="project" value="UniProtKB-KW"/>
</dbReference>
<dbReference type="GO" id="GO:0051321">
    <property type="term" value="P:meiotic cell cycle"/>
    <property type="evidence" value="ECO:0007669"/>
    <property type="project" value="UniProtKB-KW"/>
</dbReference>
<dbReference type="GO" id="GO:1905168">
    <property type="term" value="P:positive regulation of double-strand break repair via homologous recombination"/>
    <property type="evidence" value="ECO:0000250"/>
    <property type="project" value="UniProtKB"/>
</dbReference>
<dbReference type="GO" id="GO:0010845">
    <property type="term" value="P:positive regulation of reciprocal meiotic recombination"/>
    <property type="evidence" value="ECO:0000250"/>
    <property type="project" value="UniProtKB"/>
</dbReference>
<dbReference type="GO" id="GO:0010569">
    <property type="term" value="P:regulation of double-strand break repair via homologous recombination"/>
    <property type="evidence" value="ECO:0000250"/>
    <property type="project" value="UniProtKB"/>
</dbReference>
<dbReference type="InterPro" id="IPR052003">
    <property type="entry name" value="HR_DNA-Binding_Protein"/>
</dbReference>
<dbReference type="InterPro" id="IPR031419">
    <property type="entry name" value="RAD51_interact"/>
</dbReference>
<dbReference type="PANTHER" id="PTHR15361:SF4">
    <property type="entry name" value="RAD51-ASSOCIATED PROTEIN 1"/>
    <property type="match status" value="1"/>
</dbReference>
<dbReference type="PANTHER" id="PTHR15361">
    <property type="entry name" value="RAD51/NUKS-INTERACTING PROTEIN"/>
    <property type="match status" value="1"/>
</dbReference>
<dbReference type="Pfam" id="PF15696">
    <property type="entry name" value="RAD51_interact"/>
    <property type="match status" value="1"/>
</dbReference>